<gene>
    <name evidence="1" type="primary">hemF</name>
    <name type="ordered locus">VCM66_0055</name>
</gene>
<sequence length="305" mass="35152">MKSNIDKQAVKNFLLQLQDQICQQLEAADGQAQFIEDAWQREPGEKLGGGGRTRVMRDGAVFEQGGVNFSHVFGEQMPGSATAHRPELAGRRFEAMGVSLVMHPKNPYVPTSHANVRYFIAEKEGEDPIWWFGGGFDLTPFYPFVEDCQLWHQTAKNLCAPFGAEIYNEHKAWCDRYFYLPHRNETRGIGGLFFDDLNEWPFEQCFAYMQAVGEGYTQAYVPIVEKRKNTPFTERERQFQLYRRGRYVEFNLVLDRGTLFGLQTGGRTESILMSMPPLARWEYAYQPESGTPEAQLSEFLVPREW</sequence>
<protein>
    <recommendedName>
        <fullName evidence="1">Oxygen-dependent coproporphyrinogen-III oxidase</fullName>
        <shortName evidence="1">CPO</shortName>
        <shortName evidence="1">Coprogen oxidase</shortName>
        <shortName evidence="1">Coproporphyrinogenase</shortName>
        <ecNumber evidence="1">1.3.3.3</ecNumber>
    </recommendedName>
</protein>
<name>HEM6_VIBCM</name>
<dbReference type="EC" id="1.3.3.3" evidence="1"/>
<dbReference type="EMBL" id="CP001233">
    <property type="protein sequence ID" value="ACP04392.1"/>
    <property type="molecule type" value="Genomic_DNA"/>
</dbReference>
<dbReference type="RefSeq" id="WP_000841188.1">
    <property type="nucleotide sequence ID" value="NC_012578.1"/>
</dbReference>
<dbReference type="SMR" id="C3LPC8"/>
<dbReference type="KEGG" id="vcm:VCM66_0055"/>
<dbReference type="HOGENOM" id="CLU_026169_0_1_6"/>
<dbReference type="UniPathway" id="UPA00251">
    <property type="reaction ID" value="UER00322"/>
</dbReference>
<dbReference type="Proteomes" id="UP000001217">
    <property type="component" value="Chromosome I"/>
</dbReference>
<dbReference type="GO" id="GO:0005737">
    <property type="term" value="C:cytoplasm"/>
    <property type="evidence" value="ECO:0007669"/>
    <property type="project" value="UniProtKB-SubCell"/>
</dbReference>
<dbReference type="GO" id="GO:0004109">
    <property type="term" value="F:coproporphyrinogen oxidase activity"/>
    <property type="evidence" value="ECO:0007669"/>
    <property type="project" value="UniProtKB-UniRule"/>
</dbReference>
<dbReference type="GO" id="GO:0046872">
    <property type="term" value="F:metal ion binding"/>
    <property type="evidence" value="ECO:0007669"/>
    <property type="project" value="UniProtKB-KW"/>
</dbReference>
<dbReference type="GO" id="GO:0042803">
    <property type="term" value="F:protein homodimerization activity"/>
    <property type="evidence" value="ECO:0000250"/>
    <property type="project" value="UniProtKB"/>
</dbReference>
<dbReference type="GO" id="GO:0006782">
    <property type="term" value="P:protoporphyrinogen IX biosynthetic process"/>
    <property type="evidence" value="ECO:0007669"/>
    <property type="project" value="UniProtKB-UniRule"/>
</dbReference>
<dbReference type="FunFam" id="3.40.1500.10:FF:000001">
    <property type="entry name" value="Oxygen-dependent coproporphyrinogen-III oxidase"/>
    <property type="match status" value="1"/>
</dbReference>
<dbReference type="Gene3D" id="3.40.1500.10">
    <property type="entry name" value="Coproporphyrinogen III oxidase, aerobic"/>
    <property type="match status" value="1"/>
</dbReference>
<dbReference type="HAMAP" id="MF_00333">
    <property type="entry name" value="Coprogen_oxidas"/>
    <property type="match status" value="1"/>
</dbReference>
<dbReference type="InterPro" id="IPR001260">
    <property type="entry name" value="Coprogen_oxidase_aer"/>
</dbReference>
<dbReference type="InterPro" id="IPR036406">
    <property type="entry name" value="Coprogen_oxidase_aer_sf"/>
</dbReference>
<dbReference type="InterPro" id="IPR018375">
    <property type="entry name" value="Coprogen_oxidase_CS"/>
</dbReference>
<dbReference type="NCBIfam" id="NF003727">
    <property type="entry name" value="PRK05330.1"/>
    <property type="match status" value="1"/>
</dbReference>
<dbReference type="PANTHER" id="PTHR10755">
    <property type="entry name" value="COPROPORPHYRINOGEN III OXIDASE, MITOCHONDRIAL"/>
    <property type="match status" value="1"/>
</dbReference>
<dbReference type="PANTHER" id="PTHR10755:SF0">
    <property type="entry name" value="OXYGEN-DEPENDENT COPROPORPHYRINOGEN-III OXIDASE, MITOCHONDRIAL"/>
    <property type="match status" value="1"/>
</dbReference>
<dbReference type="Pfam" id="PF01218">
    <property type="entry name" value="Coprogen_oxidas"/>
    <property type="match status" value="1"/>
</dbReference>
<dbReference type="PIRSF" id="PIRSF000166">
    <property type="entry name" value="Coproporphyri_ox"/>
    <property type="match status" value="1"/>
</dbReference>
<dbReference type="PRINTS" id="PR00073">
    <property type="entry name" value="COPRGNOXDASE"/>
</dbReference>
<dbReference type="SUPFAM" id="SSF102886">
    <property type="entry name" value="Coproporphyrinogen III oxidase"/>
    <property type="match status" value="1"/>
</dbReference>
<dbReference type="PROSITE" id="PS01021">
    <property type="entry name" value="COPROGEN_OXIDASE"/>
    <property type="match status" value="1"/>
</dbReference>
<proteinExistence type="inferred from homology"/>
<comment type="function">
    <text evidence="1">Involved in the heme biosynthesis. Catalyzes the aerobic oxidative decarboxylation of propionate groups of rings A and B of coproporphyrinogen-III to yield the vinyl groups in protoporphyrinogen-IX.</text>
</comment>
<comment type="catalytic activity">
    <reaction evidence="1">
        <text>coproporphyrinogen III + O2 + 2 H(+) = protoporphyrinogen IX + 2 CO2 + 2 H2O</text>
        <dbReference type="Rhea" id="RHEA:18257"/>
        <dbReference type="ChEBI" id="CHEBI:15377"/>
        <dbReference type="ChEBI" id="CHEBI:15378"/>
        <dbReference type="ChEBI" id="CHEBI:15379"/>
        <dbReference type="ChEBI" id="CHEBI:16526"/>
        <dbReference type="ChEBI" id="CHEBI:57307"/>
        <dbReference type="ChEBI" id="CHEBI:57309"/>
        <dbReference type="EC" id="1.3.3.3"/>
    </reaction>
</comment>
<comment type="cofactor">
    <cofactor evidence="1">
        <name>a divalent metal cation</name>
        <dbReference type="ChEBI" id="CHEBI:60240"/>
    </cofactor>
</comment>
<comment type="pathway">
    <text evidence="1">Porphyrin-containing compound metabolism; protoporphyrin-IX biosynthesis; protoporphyrinogen-IX from coproporphyrinogen-III (O2 route): step 1/1.</text>
</comment>
<comment type="subunit">
    <text evidence="1">Homodimer.</text>
</comment>
<comment type="subcellular location">
    <subcellularLocation>
        <location evidence="1">Cytoplasm</location>
    </subcellularLocation>
</comment>
<comment type="similarity">
    <text evidence="1">Belongs to the aerobic coproporphyrinogen-III oxidase family.</text>
</comment>
<reference key="1">
    <citation type="journal article" date="2008" name="PLoS ONE">
        <title>A recalibrated molecular clock and independent origins for the cholera pandemic clones.</title>
        <authorList>
            <person name="Feng L."/>
            <person name="Reeves P.R."/>
            <person name="Lan R."/>
            <person name="Ren Y."/>
            <person name="Gao C."/>
            <person name="Zhou Z."/>
            <person name="Ren Y."/>
            <person name="Cheng J."/>
            <person name="Wang W."/>
            <person name="Wang J."/>
            <person name="Qian W."/>
            <person name="Li D."/>
            <person name="Wang L."/>
        </authorList>
    </citation>
    <scope>NUCLEOTIDE SEQUENCE [LARGE SCALE GENOMIC DNA]</scope>
    <source>
        <strain>M66-2</strain>
    </source>
</reference>
<feature type="chain" id="PRO_1000133192" description="Oxygen-dependent coproporphyrinogen-III oxidase">
    <location>
        <begin position="1"/>
        <end position="305"/>
    </location>
</feature>
<feature type="region of interest" description="Important for dimerization" evidence="1">
    <location>
        <begin position="247"/>
        <end position="282"/>
    </location>
</feature>
<feature type="active site" description="Proton donor" evidence="1">
    <location>
        <position position="113"/>
    </location>
</feature>
<feature type="binding site" evidence="1">
    <location>
        <position position="99"/>
    </location>
    <ligand>
        <name>substrate</name>
    </ligand>
</feature>
<feature type="binding site" evidence="1">
    <location>
        <position position="103"/>
    </location>
    <ligand>
        <name>a divalent metal cation</name>
        <dbReference type="ChEBI" id="CHEBI:60240"/>
    </ligand>
</feature>
<feature type="binding site" evidence="1">
    <location>
        <position position="113"/>
    </location>
    <ligand>
        <name>a divalent metal cation</name>
        <dbReference type="ChEBI" id="CHEBI:60240"/>
    </ligand>
</feature>
<feature type="binding site" evidence="1">
    <location>
        <begin position="115"/>
        <end position="117"/>
    </location>
    <ligand>
        <name>substrate</name>
    </ligand>
</feature>
<feature type="binding site" evidence="1">
    <location>
        <position position="152"/>
    </location>
    <ligand>
        <name>a divalent metal cation</name>
        <dbReference type="ChEBI" id="CHEBI:60240"/>
    </ligand>
</feature>
<feature type="binding site" evidence="1">
    <location>
        <position position="182"/>
    </location>
    <ligand>
        <name>a divalent metal cation</name>
        <dbReference type="ChEBI" id="CHEBI:60240"/>
    </ligand>
</feature>
<feature type="binding site" evidence="1">
    <location>
        <begin position="265"/>
        <end position="267"/>
    </location>
    <ligand>
        <name>substrate</name>
    </ligand>
</feature>
<feature type="site" description="Important for dimerization" evidence="1">
    <location>
        <position position="182"/>
    </location>
</feature>
<evidence type="ECO:0000255" key="1">
    <source>
        <dbReference type="HAMAP-Rule" id="MF_00333"/>
    </source>
</evidence>
<organism>
    <name type="scientific">Vibrio cholerae serotype O1 (strain M66-2)</name>
    <dbReference type="NCBI Taxonomy" id="579112"/>
    <lineage>
        <taxon>Bacteria</taxon>
        <taxon>Pseudomonadati</taxon>
        <taxon>Pseudomonadota</taxon>
        <taxon>Gammaproteobacteria</taxon>
        <taxon>Vibrionales</taxon>
        <taxon>Vibrionaceae</taxon>
        <taxon>Vibrio</taxon>
    </lineage>
</organism>
<keyword id="KW-0963">Cytoplasm</keyword>
<keyword id="KW-0350">Heme biosynthesis</keyword>
<keyword id="KW-0479">Metal-binding</keyword>
<keyword id="KW-0560">Oxidoreductase</keyword>
<keyword id="KW-0627">Porphyrin biosynthesis</keyword>
<accession>C3LPC8</accession>